<feature type="peptide" id="PRO_0000044558" description="M-lycotoxin-Hc1a" evidence="3">
    <location>
        <begin position="1"/>
        <end position="25"/>
    </location>
</feature>
<feature type="modified residue" description="Leucine amide" evidence="3">
    <location>
        <position position="25"/>
    </location>
</feature>
<feature type="mutagenesis site" description="In A6; 13% increase in lepidopteran larvae mortality at day 1, and 74% at day 2; when associated with 24-K-L-25." evidence="2">
    <original>F</original>
    <variation>H</variation>
    <location>
        <position position="8"/>
    </location>
</feature>
<feature type="mutagenesis site" description="In C6; 4% increase in lepidopteran larvae mortality at day 1, and 100% at day 2; when associated with 24-K-L-25." evidence="2">
    <original>L</original>
    <variation>S</variation>
    <location>
        <position position="9"/>
    </location>
</feature>
<feature type="mutagenesis site" description="In B9; no increase in lepidopteran larvae mortality at day 1, and 97% at day 2; when associated with H-20; S-21 and 24-K-L-25." evidence="2">
    <original>G</original>
    <variation>Q</variation>
    <location>
        <position position="10"/>
    </location>
</feature>
<feature type="mutagenesis site" description="In B9; no increase in lepidopteran larvae mortality at day 1, and 97% at day 2; when associated with Q-10; S-21 and 24-K-L-25." evidence="2">
    <original>Q</original>
    <variation>H</variation>
    <location>
        <position position="20"/>
    </location>
</feature>
<feature type="mutagenesis site" description="In B9; no increase in lepidopteran larvae mortality at day 1, and 97% at day 2; when associated with Q-10; H-20 and 24-K-L-25." evidence="2">
    <original>Q</original>
    <variation>S</variation>
    <location>
        <position position="21"/>
    </location>
</feature>
<feature type="mutagenesis site" description="3% increase in lepidopteran larvae mortality at day 1, and 71% at day 2. In A6; 13% increase in lepidopteran larvae mortality at day 1, and 74% at day 2; when associated with H-8. In B9; no increase in lepidopteran larvae mortality at day 1, and 97% at day 2; when associated with Q-10; H-20 and S-21. In C6; 4% increase in lepidopteran larvae mortality at day 1, and 100% at day 2; when associated with S-9." evidence="2">
    <original>KL</original>
    <variation>PW</variation>
    <location>
        <begin position="24"/>
        <end position="25"/>
    </location>
</feature>
<proteinExistence type="evidence at protein level"/>
<evidence type="ECO:0000269" key="1">
    <source>
    </source>
</evidence>
<evidence type="ECO:0000269" key="2">
    <source>
    </source>
</evidence>
<evidence type="ECO:0000269" key="3">
    <source>
    </source>
</evidence>
<evidence type="ECO:0000303" key="4">
    <source>
    </source>
</evidence>
<evidence type="ECO:0000305" key="5"/>
<evidence type="ECO:0000305" key="6">
    <source>
    </source>
</evidence>
<comment type="function">
    <text evidence="1 3">Forms pore that permeabilize the cell membrane. Promotes efflux of calcium from synaptosomes, causes hemolysis, and dissipates voltage gradients across muscle membrane. Potently inhibits the growth of bacteria, yeast and Leishmania. Is lethal to lepidopteran larvae. May function both in the prey capture strategy as well as protection from infectious organisms arising from prey ingestion.</text>
</comment>
<comment type="subcellular location">
    <subcellularLocation>
        <location evidence="3">Secreted</location>
    </subcellularLocation>
    <subcellularLocation>
        <location evidence="1">Target cell membrane</location>
    </subcellularLocation>
</comment>
<comment type="tissue specificity">
    <text evidence="6">Expressed by the venom gland.</text>
</comment>
<comment type="mass spectrometry" mass="2843.4" method="MALDI" evidence="3"/>
<comment type="miscellaneous">
    <text evidence="2">Mutated toxins are expressed as transgene in yeasts. Yeasts containing transgenes cause lethality when feed to lepidopteran larvae (S.frugiperda).</text>
</comment>
<comment type="similarity">
    <text evidence="5">Belongs to the cationic peptide 04 (cupiennin) family. 05 subfamily.</text>
</comment>
<dbReference type="SMR" id="P61507"/>
<dbReference type="TCDB" id="8.B.10.2.1">
    <property type="family name" value="the psalmotoxin-1 (pctx1) family"/>
</dbReference>
<dbReference type="ArachnoServer" id="AS000065">
    <property type="toxin name" value="M-lycotoxin-Hc1a"/>
</dbReference>
<dbReference type="GO" id="GO:0005576">
    <property type="term" value="C:extracellular region"/>
    <property type="evidence" value="ECO:0007669"/>
    <property type="project" value="UniProtKB-SubCell"/>
</dbReference>
<dbReference type="GO" id="GO:0016020">
    <property type="term" value="C:membrane"/>
    <property type="evidence" value="ECO:0007669"/>
    <property type="project" value="UniProtKB-KW"/>
</dbReference>
<dbReference type="GO" id="GO:0044218">
    <property type="term" value="C:other organism cell membrane"/>
    <property type="evidence" value="ECO:0007669"/>
    <property type="project" value="UniProtKB-KW"/>
</dbReference>
<dbReference type="GO" id="GO:0090729">
    <property type="term" value="F:toxin activity"/>
    <property type="evidence" value="ECO:0007669"/>
    <property type="project" value="UniProtKB-KW"/>
</dbReference>
<dbReference type="GO" id="GO:0042742">
    <property type="term" value="P:defense response to bacterium"/>
    <property type="evidence" value="ECO:0007669"/>
    <property type="project" value="UniProtKB-KW"/>
</dbReference>
<dbReference type="GO" id="GO:0031640">
    <property type="term" value="P:killing of cells of another organism"/>
    <property type="evidence" value="ECO:0007669"/>
    <property type="project" value="UniProtKB-KW"/>
</dbReference>
<dbReference type="GO" id="GO:0006811">
    <property type="term" value="P:monoatomic ion transport"/>
    <property type="evidence" value="ECO:0007669"/>
    <property type="project" value="UniProtKB-KW"/>
</dbReference>
<organism>
    <name type="scientific">Hogna carolinensis</name>
    <name type="common">Carolina wolf spider</name>
    <name type="synonym">Lycosa carolinensis</name>
    <dbReference type="NCBI Taxonomy" id="278031"/>
    <lineage>
        <taxon>Eukaryota</taxon>
        <taxon>Metazoa</taxon>
        <taxon>Ecdysozoa</taxon>
        <taxon>Arthropoda</taxon>
        <taxon>Chelicerata</taxon>
        <taxon>Arachnida</taxon>
        <taxon>Araneae</taxon>
        <taxon>Araneomorphae</taxon>
        <taxon>Entelegynae</taxon>
        <taxon>Lycosoidea</taxon>
        <taxon>Lycosidae</taxon>
        <taxon>Hogna</taxon>
    </lineage>
</organism>
<sequence length="25" mass="2844">IWLTALKFLGKHAAKHLAKQQLSKL</sequence>
<accession>P61507</accession>
<name>LYT1_HOGCA</name>
<reference key="1">
    <citation type="journal article" date="1998" name="J. Biol. Chem.">
        <title>Lycotoxins, antimicrobial peptides from venom of the wolf spider Lycosa carolinensis.</title>
        <authorList>
            <person name="Yan L."/>
            <person name="Adams M.E."/>
        </authorList>
    </citation>
    <scope>PROTEIN SEQUENCE</scope>
    <scope>FUNCTION</scope>
    <scope>SYNTHESIS</scope>
    <scope>MASS SPECTROMETRY</scope>
    <scope>SUBCELLULAR LOCATION</scope>
    <scope>AMIDATION AT LEU-25</scope>
    <source>
        <tissue>Venom</tissue>
    </source>
</reference>
<reference key="2">
    <citation type="journal article" date="2008" name="J. Pept. Sci.">
        <title>Membrane structure and interactions of a short Lycotoxin I analogue.</title>
        <authorList>
            <person name="Adao R."/>
            <person name="Seixas R."/>
            <person name="Gomes P."/>
            <person name="Pessoa J.C."/>
            <person name="Bastos M."/>
        </authorList>
    </citation>
    <scope>FUNCTION</scope>
    <scope>CIRCULAR DICHROISM</scope>
    <scope>MEMBRANE INTERACTION OF SHORT LYCOTOXIN-1 ANALOG</scope>
</reference>
<reference key="3">
    <citation type="journal article" date="2008" name="J. Pept. Sci.">
        <title>Lycotoxin-1 insecticidal peptide optimized by amino acid scanning mutagenesis and expressed as a coproduct in an ethanologenic Saccharomyces cerevisiae strain.</title>
        <authorList>
            <person name="Hughes S.R."/>
            <person name="Dowd P.F."/>
            <person name="Hector R.E."/>
            <person name="Panavas T."/>
            <person name="Sterner D.E."/>
            <person name="Qureshi N."/>
            <person name="Bischoff K.M."/>
            <person name="Bang S.S."/>
            <person name="Mertens J.A."/>
            <person name="Johnson E.T."/>
            <person name="Li X.-L."/>
            <person name="Jackson J.S."/>
            <person name="Caughey R.J."/>
            <person name="Riedmuller S.B."/>
            <person name="Bartolett S."/>
            <person name="Liu S."/>
            <person name="Rich J.O."/>
            <person name="Farrelly P.J."/>
            <person name="Butt T.R."/>
            <person name="Labaer J."/>
            <person name="Cotta M.A."/>
        </authorList>
    </citation>
    <scope>MUTAGENESIS OF PHE-8; LEU-9; GLY-10; GLN-20; GLN-21 AND 24-LYS-LEU-25</scope>
    <scope>RECOMBINANT EXPRESSION</scope>
</reference>
<protein>
    <recommendedName>
        <fullName>M-lycotoxin-Hc1a</fullName>
        <shortName>M-LCTX-Hc1a</shortName>
    </recommendedName>
    <alternativeName>
        <fullName evidence="4">Lycotoxin I</fullName>
    </alternativeName>
    <alternativeName>
        <fullName>Lycotoxin-1</fullName>
    </alternativeName>
</protein>
<keyword id="KW-0027">Amidation</keyword>
<keyword id="KW-0044">Antibiotic</keyword>
<keyword id="KW-0929">Antimicrobial</keyword>
<keyword id="KW-0204">Cytolysis</keyword>
<keyword id="KW-0903">Direct protein sequencing</keyword>
<keyword id="KW-0354">Hemolysis</keyword>
<keyword id="KW-0406">Ion transport</keyword>
<keyword id="KW-0472">Membrane</keyword>
<keyword id="KW-0528">Neurotoxin</keyword>
<keyword id="KW-0964">Secreted</keyword>
<keyword id="KW-1052">Target cell membrane</keyword>
<keyword id="KW-1053">Target membrane</keyword>
<keyword id="KW-0800">Toxin</keyword>
<keyword id="KW-0812">Transmembrane</keyword>
<keyword id="KW-0813">Transport</keyword>